<dbReference type="EMBL" id="CP000247">
    <property type="protein sequence ID" value="ABG70050.1"/>
    <property type="molecule type" value="Genomic_DNA"/>
</dbReference>
<dbReference type="RefSeq" id="WP_000450409.1">
    <property type="nucleotide sequence ID" value="NC_008253.1"/>
</dbReference>
<dbReference type="SMR" id="Q0TG79"/>
<dbReference type="KEGG" id="ecp:ECP_2051"/>
<dbReference type="HOGENOM" id="CLU_153146_0_0_6"/>
<dbReference type="Proteomes" id="UP000009182">
    <property type="component" value="Chromosome"/>
</dbReference>
<dbReference type="GO" id="GO:0005829">
    <property type="term" value="C:cytosol"/>
    <property type="evidence" value="ECO:0007669"/>
    <property type="project" value="TreeGrafter"/>
</dbReference>
<dbReference type="HAMAP" id="MF_00683">
    <property type="entry name" value="Pole_loc_TmaR"/>
    <property type="match status" value="1"/>
</dbReference>
<dbReference type="InterPro" id="IPR007458">
    <property type="entry name" value="DUF496"/>
</dbReference>
<dbReference type="InterPro" id="IPR053375">
    <property type="entry name" value="UPF0265"/>
</dbReference>
<dbReference type="NCBIfam" id="NF003844">
    <property type="entry name" value="PRK05423.1"/>
    <property type="match status" value="1"/>
</dbReference>
<dbReference type="NCBIfam" id="NF040881">
    <property type="entry name" value="PTS_reg_TmaR"/>
    <property type="match status" value="1"/>
</dbReference>
<dbReference type="PANTHER" id="PTHR39591">
    <property type="entry name" value="UPF0265 PROTEIN YEEX"/>
    <property type="match status" value="1"/>
</dbReference>
<dbReference type="PANTHER" id="PTHR39591:SF1">
    <property type="entry name" value="UPF0265 PROTEIN YEEX"/>
    <property type="match status" value="1"/>
</dbReference>
<dbReference type="Pfam" id="PF04363">
    <property type="entry name" value="DUF496"/>
    <property type="match status" value="1"/>
</dbReference>
<dbReference type="PIRSF" id="PIRSF028773">
    <property type="entry name" value="UCP028773"/>
    <property type="match status" value="1"/>
</dbReference>
<sequence length="109" mass="12778">METTKPSFQDVLEFVRLFRRKNKLQREIQDVEKKIRDNQKRVLLLDNLSDYIKPGMSVEAIQGIIASMKGDYEDRVDDYIIKNAELSKERRDISKKLKAMGEMKNGEAK</sequence>
<feature type="chain" id="PRO_1000044927" description="Pole-localizer protein TmaR">
    <location>
        <begin position="1"/>
        <end position="109"/>
    </location>
</feature>
<feature type="coiled-coil region" evidence="1">
    <location>
        <begin position="14"/>
        <end position="41"/>
    </location>
</feature>
<evidence type="ECO:0000255" key="1">
    <source>
        <dbReference type="HAMAP-Rule" id="MF_00683"/>
    </source>
</evidence>
<protein>
    <recommendedName>
        <fullName evidence="1">Pole-localizer protein TmaR</fullName>
    </recommendedName>
</protein>
<name>TMAR_ECOL5</name>
<accession>Q0TG79</accession>
<keyword id="KW-0175">Coiled coil</keyword>
<keyword id="KW-0963">Cytoplasm</keyword>
<comment type="function">
    <text evidence="1">Pole-localizer protein involved in the regulation of several cellular processes.</text>
</comment>
<comment type="subcellular location">
    <subcellularLocation>
        <location evidence="1">Cytoplasm</location>
    </subcellularLocation>
    <text evidence="1">Forms clusters that localize mainly near one pole of the cell.</text>
</comment>
<comment type="similarity">
    <text evidence="1">Belongs to the pole-localizer TmaR family.</text>
</comment>
<organism>
    <name type="scientific">Escherichia coli O6:K15:H31 (strain 536 / UPEC)</name>
    <dbReference type="NCBI Taxonomy" id="362663"/>
    <lineage>
        <taxon>Bacteria</taxon>
        <taxon>Pseudomonadati</taxon>
        <taxon>Pseudomonadota</taxon>
        <taxon>Gammaproteobacteria</taxon>
        <taxon>Enterobacterales</taxon>
        <taxon>Enterobacteriaceae</taxon>
        <taxon>Escherichia</taxon>
    </lineage>
</organism>
<proteinExistence type="inferred from homology"/>
<reference key="1">
    <citation type="journal article" date="2006" name="Mol. Microbiol.">
        <title>Role of pathogenicity island-associated integrases in the genome plasticity of uropathogenic Escherichia coli strain 536.</title>
        <authorList>
            <person name="Hochhut B."/>
            <person name="Wilde C."/>
            <person name="Balling G."/>
            <person name="Middendorf B."/>
            <person name="Dobrindt U."/>
            <person name="Brzuszkiewicz E."/>
            <person name="Gottschalk G."/>
            <person name="Carniel E."/>
            <person name="Hacker J."/>
        </authorList>
    </citation>
    <scope>NUCLEOTIDE SEQUENCE [LARGE SCALE GENOMIC DNA]</scope>
    <source>
        <strain>536 / UPEC</strain>
    </source>
</reference>
<gene>
    <name evidence="1" type="primary">tmaR</name>
    <name type="ordered locus">ECP_2051</name>
</gene>